<proteinExistence type="inferred from homology"/>
<evidence type="ECO:0000255" key="1">
    <source>
        <dbReference type="HAMAP-Rule" id="MF_01007"/>
    </source>
</evidence>
<evidence type="ECO:0000305" key="2"/>
<sequence>MTKEFHHVTVLLHETVDMLDIKPDGIYVDATLGGSGHSAYLLSKLGEEGHLYCFDQDQKAIDNAQVTLKSYIDKGQVTFIKDNFRHLKARLTALGVDEIDGILYDLGVSSPQLDERERGFSYKQDAPLDMRMDRQSLLTAYEVVNTYPFNDLVKIFFKYGEDKFSKQIARKIEQARAIKPIETTTELAELIKAAKPAKELKKKGHPAKQIFQAIRIEVNDELGAADESIQEAMELLALDGRISVITFHSLEDRLTKQLFKEASTVDVPKGLPLIPEDMKPKFELVSRKPILPSHSELAANKRAHSAKLRVAKKIRK</sequence>
<keyword id="KW-0963">Cytoplasm</keyword>
<keyword id="KW-0489">Methyltransferase</keyword>
<keyword id="KW-0698">rRNA processing</keyword>
<keyword id="KW-0949">S-adenosyl-L-methionine</keyword>
<keyword id="KW-0808">Transferase</keyword>
<reference key="1">
    <citation type="journal article" date="2004" name="J. Infect. Dis.">
        <title>Progress toward characterization of the group A Streptococcus metagenome: complete genome sequence of a macrolide-resistant serotype M6 strain.</title>
        <authorList>
            <person name="Banks D.J."/>
            <person name="Porcella S.F."/>
            <person name="Barbian K.D."/>
            <person name="Beres S.B."/>
            <person name="Philips L.E."/>
            <person name="Voyich J.M."/>
            <person name="DeLeo F.R."/>
            <person name="Martin J.M."/>
            <person name="Somerville G.A."/>
            <person name="Musser J.M."/>
        </authorList>
    </citation>
    <scope>NUCLEOTIDE SEQUENCE [LARGE SCALE GENOMIC DNA]</scope>
    <source>
        <strain>ATCC BAA-946 / MGAS10394</strain>
    </source>
</reference>
<gene>
    <name evidence="1" type="primary">rsmH</name>
    <name type="synonym">mraW</name>
    <name type="ordered locus">M6_Spy1415</name>
</gene>
<protein>
    <recommendedName>
        <fullName evidence="1">Ribosomal RNA small subunit methyltransferase H</fullName>
        <ecNumber evidence="1">2.1.1.199</ecNumber>
    </recommendedName>
    <alternativeName>
        <fullName evidence="1">16S rRNA m(4)C1402 methyltransferase</fullName>
    </alternativeName>
    <alternativeName>
        <fullName evidence="1">rRNA (cytosine-N(4)-)-methyltransferase RsmH</fullName>
    </alternativeName>
</protein>
<comment type="function">
    <text evidence="1">Specifically methylates the N4 position of cytidine in position 1402 (C1402) of 16S rRNA.</text>
</comment>
<comment type="catalytic activity">
    <reaction evidence="1">
        <text>cytidine(1402) in 16S rRNA + S-adenosyl-L-methionine = N(4)-methylcytidine(1402) in 16S rRNA + S-adenosyl-L-homocysteine + H(+)</text>
        <dbReference type="Rhea" id="RHEA:42928"/>
        <dbReference type="Rhea" id="RHEA-COMP:10286"/>
        <dbReference type="Rhea" id="RHEA-COMP:10287"/>
        <dbReference type="ChEBI" id="CHEBI:15378"/>
        <dbReference type="ChEBI" id="CHEBI:57856"/>
        <dbReference type="ChEBI" id="CHEBI:59789"/>
        <dbReference type="ChEBI" id="CHEBI:74506"/>
        <dbReference type="ChEBI" id="CHEBI:82748"/>
        <dbReference type="EC" id="2.1.1.199"/>
    </reaction>
</comment>
<comment type="subcellular location">
    <subcellularLocation>
        <location evidence="1">Cytoplasm</location>
    </subcellularLocation>
</comment>
<comment type="similarity">
    <text evidence="1">Belongs to the methyltransferase superfamily. RsmH family.</text>
</comment>
<comment type="sequence caution" evidence="2">
    <conflict type="erroneous initiation">
        <sequence resource="EMBL-CDS" id="AAT87550"/>
    </conflict>
</comment>
<feature type="chain" id="PRO_0000108723" description="Ribosomal RNA small subunit methyltransferase H">
    <location>
        <begin position="1"/>
        <end position="316"/>
    </location>
</feature>
<feature type="binding site" evidence="1">
    <location>
        <begin position="35"/>
        <end position="37"/>
    </location>
    <ligand>
        <name>S-adenosyl-L-methionine</name>
        <dbReference type="ChEBI" id="CHEBI:59789"/>
    </ligand>
</feature>
<feature type="binding site" evidence="1">
    <location>
        <position position="55"/>
    </location>
    <ligand>
        <name>S-adenosyl-L-methionine</name>
        <dbReference type="ChEBI" id="CHEBI:59789"/>
    </ligand>
</feature>
<feature type="binding site" evidence="1">
    <location>
        <position position="84"/>
    </location>
    <ligand>
        <name>S-adenosyl-L-methionine</name>
        <dbReference type="ChEBI" id="CHEBI:59789"/>
    </ligand>
</feature>
<feature type="binding site" evidence="1">
    <location>
        <position position="105"/>
    </location>
    <ligand>
        <name>S-adenosyl-L-methionine</name>
        <dbReference type="ChEBI" id="CHEBI:59789"/>
    </ligand>
</feature>
<feature type="binding site" evidence="1">
    <location>
        <position position="112"/>
    </location>
    <ligand>
        <name>S-adenosyl-L-methionine</name>
        <dbReference type="ChEBI" id="CHEBI:59789"/>
    </ligand>
</feature>
<accession>Q5XAL3</accession>
<dbReference type="EC" id="2.1.1.199" evidence="1"/>
<dbReference type="EMBL" id="CP000003">
    <property type="protein sequence ID" value="AAT87550.1"/>
    <property type="status" value="ALT_INIT"/>
    <property type="molecule type" value="Genomic_DNA"/>
</dbReference>
<dbReference type="RefSeq" id="WP_032461292.1">
    <property type="nucleotide sequence ID" value="NC_006086.1"/>
</dbReference>
<dbReference type="SMR" id="Q5XAL3"/>
<dbReference type="KEGG" id="spa:M6_Spy1415"/>
<dbReference type="HOGENOM" id="CLU_038422_2_0_9"/>
<dbReference type="Proteomes" id="UP000001167">
    <property type="component" value="Chromosome"/>
</dbReference>
<dbReference type="GO" id="GO:0005737">
    <property type="term" value="C:cytoplasm"/>
    <property type="evidence" value="ECO:0007669"/>
    <property type="project" value="UniProtKB-SubCell"/>
</dbReference>
<dbReference type="GO" id="GO:0071424">
    <property type="term" value="F:rRNA (cytosine-N4-)-methyltransferase activity"/>
    <property type="evidence" value="ECO:0007669"/>
    <property type="project" value="UniProtKB-UniRule"/>
</dbReference>
<dbReference type="GO" id="GO:0070475">
    <property type="term" value="P:rRNA base methylation"/>
    <property type="evidence" value="ECO:0007669"/>
    <property type="project" value="UniProtKB-UniRule"/>
</dbReference>
<dbReference type="FunFam" id="1.10.150.170:FF:000001">
    <property type="entry name" value="Ribosomal RNA small subunit methyltransferase H"/>
    <property type="match status" value="1"/>
</dbReference>
<dbReference type="Gene3D" id="1.10.150.170">
    <property type="entry name" value="Putative methyltransferase TM0872, insert domain"/>
    <property type="match status" value="1"/>
</dbReference>
<dbReference type="Gene3D" id="3.40.50.150">
    <property type="entry name" value="Vaccinia Virus protein VP39"/>
    <property type="match status" value="1"/>
</dbReference>
<dbReference type="HAMAP" id="MF_01007">
    <property type="entry name" value="16SrRNA_methyltr_H"/>
    <property type="match status" value="1"/>
</dbReference>
<dbReference type="InterPro" id="IPR002903">
    <property type="entry name" value="RsmH"/>
</dbReference>
<dbReference type="InterPro" id="IPR023397">
    <property type="entry name" value="SAM-dep_MeTrfase_MraW_recog"/>
</dbReference>
<dbReference type="InterPro" id="IPR029063">
    <property type="entry name" value="SAM-dependent_MTases_sf"/>
</dbReference>
<dbReference type="NCBIfam" id="TIGR00006">
    <property type="entry name" value="16S rRNA (cytosine(1402)-N(4))-methyltransferase RsmH"/>
    <property type="match status" value="1"/>
</dbReference>
<dbReference type="PANTHER" id="PTHR11265:SF0">
    <property type="entry name" value="12S RRNA N4-METHYLCYTIDINE METHYLTRANSFERASE"/>
    <property type="match status" value="1"/>
</dbReference>
<dbReference type="PANTHER" id="PTHR11265">
    <property type="entry name" value="S-ADENOSYL-METHYLTRANSFERASE MRAW"/>
    <property type="match status" value="1"/>
</dbReference>
<dbReference type="Pfam" id="PF01795">
    <property type="entry name" value="Methyltransf_5"/>
    <property type="match status" value="1"/>
</dbReference>
<dbReference type="PIRSF" id="PIRSF004486">
    <property type="entry name" value="MraW"/>
    <property type="match status" value="1"/>
</dbReference>
<dbReference type="SUPFAM" id="SSF81799">
    <property type="entry name" value="Putative methyltransferase TM0872, insert domain"/>
    <property type="match status" value="1"/>
</dbReference>
<dbReference type="SUPFAM" id="SSF53335">
    <property type="entry name" value="S-adenosyl-L-methionine-dependent methyltransferases"/>
    <property type="match status" value="1"/>
</dbReference>
<organism>
    <name type="scientific">Streptococcus pyogenes serotype M6 (strain ATCC BAA-946 / MGAS10394)</name>
    <dbReference type="NCBI Taxonomy" id="286636"/>
    <lineage>
        <taxon>Bacteria</taxon>
        <taxon>Bacillati</taxon>
        <taxon>Bacillota</taxon>
        <taxon>Bacilli</taxon>
        <taxon>Lactobacillales</taxon>
        <taxon>Streptococcaceae</taxon>
        <taxon>Streptococcus</taxon>
    </lineage>
</organism>
<name>RSMH_STRP6</name>